<sequence>MSQWKDICKIDDILPETGVCALLGDEQVAIFRPYHSDQVFAISNIDPFFESSVLSRGLIAEHQGELWVASPLKKQRFRLSDGLCMEDEQFSVKHYEARVKDGVVQLRG</sequence>
<accession>P0A9I9</accession>
<accession>P23675</accession>
<gene>
    <name type="primary">nirD</name>
    <name type="ordered locus">Z4727</name>
    <name type="ordered locus">ECs4217</name>
</gene>
<proteinExistence type="inferred from homology"/>
<comment type="function">
    <text evidence="1">Required for activity of the reductase.</text>
</comment>
<comment type="catalytic activity">
    <reaction>
        <text>NH4(+) + 3 NAD(+) + 2 H2O = nitrite + 3 NADH + 5 H(+)</text>
        <dbReference type="Rhea" id="RHEA:24628"/>
        <dbReference type="ChEBI" id="CHEBI:15377"/>
        <dbReference type="ChEBI" id="CHEBI:15378"/>
        <dbReference type="ChEBI" id="CHEBI:16301"/>
        <dbReference type="ChEBI" id="CHEBI:28938"/>
        <dbReference type="ChEBI" id="CHEBI:57540"/>
        <dbReference type="ChEBI" id="CHEBI:57945"/>
        <dbReference type="EC" id="1.7.1.15"/>
    </reaction>
</comment>
<comment type="subunit">
    <text evidence="1">Associates with NirB.</text>
</comment>
<comment type="subcellular location">
    <subcellularLocation>
        <location evidence="1">Cytoplasm</location>
    </subcellularLocation>
</comment>
<comment type="similarity">
    <text evidence="2">To B.subtilis NasE.</text>
</comment>
<dbReference type="EC" id="1.7.1.15"/>
<dbReference type="EMBL" id="AE005174">
    <property type="protein sequence ID" value="AAG58474.1"/>
    <property type="molecule type" value="Genomic_DNA"/>
</dbReference>
<dbReference type="EMBL" id="BA000007">
    <property type="protein sequence ID" value="BAB37640.1"/>
    <property type="molecule type" value="Genomic_DNA"/>
</dbReference>
<dbReference type="PIR" id="A91156">
    <property type="entry name" value="A91156"/>
</dbReference>
<dbReference type="PIR" id="F86001">
    <property type="entry name" value="F86001"/>
</dbReference>
<dbReference type="RefSeq" id="NP_312244.1">
    <property type="nucleotide sequence ID" value="NC_002695.1"/>
</dbReference>
<dbReference type="RefSeq" id="WP_000084764.1">
    <property type="nucleotide sequence ID" value="NZ_VOAI01000004.1"/>
</dbReference>
<dbReference type="SMR" id="P0A9I9"/>
<dbReference type="STRING" id="155864.Z4727"/>
<dbReference type="GeneID" id="915916"/>
<dbReference type="GeneID" id="93778631"/>
<dbReference type="KEGG" id="ece:Z4727"/>
<dbReference type="KEGG" id="ecs:ECs_4217"/>
<dbReference type="PATRIC" id="fig|386585.9.peg.4402"/>
<dbReference type="eggNOG" id="COG2146">
    <property type="taxonomic scope" value="Bacteria"/>
</dbReference>
<dbReference type="HOGENOM" id="CLU_055690_3_0_6"/>
<dbReference type="OMA" id="IDNRDPF"/>
<dbReference type="Proteomes" id="UP000000558">
    <property type="component" value="Chromosome"/>
</dbReference>
<dbReference type="Proteomes" id="UP000002519">
    <property type="component" value="Chromosome"/>
</dbReference>
<dbReference type="GO" id="GO:0005737">
    <property type="term" value="C:cytoplasm"/>
    <property type="evidence" value="ECO:0007669"/>
    <property type="project" value="UniProtKB-SubCell"/>
</dbReference>
<dbReference type="GO" id="GO:0009344">
    <property type="term" value="C:nitrite reductase complex [NAD(P)H]"/>
    <property type="evidence" value="ECO:0007669"/>
    <property type="project" value="TreeGrafter"/>
</dbReference>
<dbReference type="GO" id="GO:0051537">
    <property type="term" value="F:2 iron, 2 sulfur cluster binding"/>
    <property type="evidence" value="ECO:0007669"/>
    <property type="project" value="InterPro"/>
</dbReference>
<dbReference type="GO" id="GO:0106316">
    <property type="term" value="F:nitrite reductase NADH activity"/>
    <property type="evidence" value="ECO:0007669"/>
    <property type="project" value="UniProtKB-EC"/>
</dbReference>
<dbReference type="GO" id="GO:0042128">
    <property type="term" value="P:nitrate assimilation"/>
    <property type="evidence" value="ECO:0007669"/>
    <property type="project" value="UniProtKB-KW"/>
</dbReference>
<dbReference type="CDD" id="cd03529">
    <property type="entry name" value="Rieske_NirD"/>
    <property type="match status" value="1"/>
</dbReference>
<dbReference type="FunFam" id="2.102.10.10:FF:000002">
    <property type="entry name" value="Nitrite reductase [NAD(P)H] small subunit"/>
    <property type="match status" value="1"/>
</dbReference>
<dbReference type="Gene3D" id="2.102.10.10">
    <property type="entry name" value="Rieske [2Fe-2S] iron-sulphur domain"/>
    <property type="match status" value="1"/>
</dbReference>
<dbReference type="InterPro" id="IPR017881">
    <property type="entry name" value="NirD"/>
</dbReference>
<dbReference type="InterPro" id="IPR012748">
    <property type="entry name" value="Rieske-like_NirD"/>
</dbReference>
<dbReference type="InterPro" id="IPR036922">
    <property type="entry name" value="Rieske_2Fe-2S_sf"/>
</dbReference>
<dbReference type="NCBIfam" id="TIGR02378">
    <property type="entry name" value="nirD_assim_sml"/>
    <property type="match status" value="1"/>
</dbReference>
<dbReference type="NCBIfam" id="NF007066">
    <property type="entry name" value="PRK09511.1"/>
    <property type="match status" value="1"/>
</dbReference>
<dbReference type="PANTHER" id="PTHR40562">
    <property type="match status" value="1"/>
</dbReference>
<dbReference type="PANTHER" id="PTHR40562:SF1">
    <property type="entry name" value="NITRITE REDUCTASE (NADH) SMALL SUBUNIT"/>
    <property type="match status" value="1"/>
</dbReference>
<dbReference type="Pfam" id="PF13806">
    <property type="entry name" value="Rieske_2"/>
    <property type="match status" value="1"/>
</dbReference>
<dbReference type="SUPFAM" id="SSF50022">
    <property type="entry name" value="ISP domain"/>
    <property type="match status" value="1"/>
</dbReference>
<dbReference type="PROSITE" id="PS51300">
    <property type="entry name" value="NIRD"/>
    <property type="match status" value="1"/>
</dbReference>
<keyword id="KW-0963">Cytoplasm</keyword>
<keyword id="KW-0520">NAD</keyword>
<keyword id="KW-0534">Nitrate assimilation</keyword>
<keyword id="KW-0560">Oxidoreductase</keyword>
<keyword id="KW-1185">Reference proteome</keyword>
<name>NIRD_ECO57</name>
<protein>
    <recommendedName>
        <fullName>Nitrite reductase (NADH) small subunit</fullName>
        <ecNumber>1.7.1.15</ecNumber>
    </recommendedName>
</protein>
<evidence type="ECO:0000250" key="1"/>
<evidence type="ECO:0000305" key="2"/>
<organism>
    <name type="scientific">Escherichia coli O157:H7</name>
    <dbReference type="NCBI Taxonomy" id="83334"/>
    <lineage>
        <taxon>Bacteria</taxon>
        <taxon>Pseudomonadati</taxon>
        <taxon>Pseudomonadota</taxon>
        <taxon>Gammaproteobacteria</taxon>
        <taxon>Enterobacterales</taxon>
        <taxon>Enterobacteriaceae</taxon>
        <taxon>Escherichia</taxon>
    </lineage>
</organism>
<reference key="1">
    <citation type="journal article" date="2001" name="Nature">
        <title>Genome sequence of enterohaemorrhagic Escherichia coli O157:H7.</title>
        <authorList>
            <person name="Perna N.T."/>
            <person name="Plunkett G. III"/>
            <person name="Burland V."/>
            <person name="Mau B."/>
            <person name="Glasner J.D."/>
            <person name="Rose D.J."/>
            <person name="Mayhew G.F."/>
            <person name="Evans P.S."/>
            <person name="Gregor J."/>
            <person name="Kirkpatrick H.A."/>
            <person name="Posfai G."/>
            <person name="Hackett J."/>
            <person name="Klink S."/>
            <person name="Boutin A."/>
            <person name="Shao Y."/>
            <person name="Miller L."/>
            <person name="Grotbeck E.J."/>
            <person name="Davis N.W."/>
            <person name="Lim A."/>
            <person name="Dimalanta E.T."/>
            <person name="Potamousis K."/>
            <person name="Apodaca J."/>
            <person name="Anantharaman T.S."/>
            <person name="Lin J."/>
            <person name="Yen G."/>
            <person name="Schwartz D.C."/>
            <person name="Welch R.A."/>
            <person name="Blattner F.R."/>
        </authorList>
    </citation>
    <scope>NUCLEOTIDE SEQUENCE [LARGE SCALE GENOMIC DNA]</scope>
    <source>
        <strain>O157:H7 / EDL933 / ATCC 700927 / EHEC</strain>
    </source>
</reference>
<reference key="2">
    <citation type="journal article" date="2001" name="DNA Res.">
        <title>Complete genome sequence of enterohemorrhagic Escherichia coli O157:H7 and genomic comparison with a laboratory strain K-12.</title>
        <authorList>
            <person name="Hayashi T."/>
            <person name="Makino K."/>
            <person name="Ohnishi M."/>
            <person name="Kurokawa K."/>
            <person name="Ishii K."/>
            <person name="Yokoyama K."/>
            <person name="Han C.-G."/>
            <person name="Ohtsubo E."/>
            <person name="Nakayama K."/>
            <person name="Murata T."/>
            <person name="Tanaka M."/>
            <person name="Tobe T."/>
            <person name="Iida T."/>
            <person name="Takami H."/>
            <person name="Honda T."/>
            <person name="Sasakawa C."/>
            <person name="Ogasawara N."/>
            <person name="Yasunaga T."/>
            <person name="Kuhara S."/>
            <person name="Shiba T."/>
            <person name="Hattori M."/>
            <person name="Shinagawa H."/>
        </authorList>
    </citation>
    <scope>NUCLEOTIDE SEQUENCE [LARGE SCALE GENOMIC DNA]</scope>
    <source>
        <strain>O157:H7 / Sakai / RIMD 0509952 / EHEC</strain>
    </source>
</reference>
<feature type="chain" id="PRO_0000096854" description="Nitrite reductase (NADH) small subunit">
    <location>
        <begin position="1"/>
        <end position="108"/>
    </location>
</feature>